<organism>
    <name type="scientific">Shigella flexneri</name>
    <dbReference type="NCBI Taxonomy" id="623"/>
    <lineage>
        <taxon>Bacteria</taxon>
        <taxon>Pseudomonadati</taxon>
        <taxon>Pseudomonadota</taxon>
        <taxon>Gammaproteobacteria</taxon>
        <taxon>Enterobacterales</taxon>
        <taxon>Enterobacteriaceae</taxon>
        <taxon>Shigella</taxon>
    </lineage>
</organism>
<name>MLTC_SHIFL</name>
<protein>
    <recommendedName>
        <fullName evidence="1">Membrane-bound lytic murein transglycosylase C</fullName>
        <ecNumber evidence="1">4.2.2.n1</ecNumber>
    </recommendedName>
    <alternativeName>
        <fullName evidence="1">Murein lyase C</fullName>
    </alternativeName>
</protein>
<keyword id="KW-0998">Cell outer membrane</keyword>
<keyword id="KW-0961">Cell wall biogenesis/degradation</keyword>
<keyword id="KW-0449">Lipoprotein</keyword>
<keyword id="KW-0456">Lyase</keyword>
<keyword id="KW-0472">Membrane</keyword>
<keyword id="KW-0564">Palmitate</keyword>
<keyword id="KW-1185">Reference proteome</keyword>
<keyword id="KW-0732">Signal</keyword>
<reference key="1">
    <citation type="journal article" date="2002" name="Nucleic Acids Res.">
        <title>Genome sequence of Shigella flexneri 2a: insights into pathogenicity through comparison with genomes of Escherichia coli K12 and O157.</title>
        <authorList>
            <person name="Jin Q."/>
            <person name="Yuan Z."/>
            <person name="Xu J."/>
            <person name="Wang Y."/>
            <person name="Shen Y."/>
            <person name="Lu W."/>
            <person name="Wang J."/>
            <person name="Liu H."/>
            <person name="Yang J."/>
            <person name="Yang F."/>
            <person name="Zhang X."/>
            <person name="Zhang J."/>
            <person name="Yang G."/>
            <person name="Wu H."/>
            <person name="Qu D."/>
            <person name="Dong J."/>
            <person name="Sun L."/>
            <person name="Xue Y."/>
            <person name="Zhao A."/>
            <person name="Gao Y."/>
            <person name="Zhu J."/>
            <person name="Kan B."/>
            <person name="Ding K."/>
            <person name="Chen S."/>
            <person name="Cheng H."/>
            <person name="Yao Z."/>
            <person name="He B."/>
            <person name="Chen R."/>
            <person name="Ma D."/>
            <person name="Qiang B."/>
            <person name="Wen Y."/>
            <person name="Hou Y."/>
            <person name="Yu J."/>
        </authorList>
    </citation>
    <scope>NUCLEOTIDE SEQUENCE [LARGE SCALE GENOMIC DNA]</scope>
    <source>
        <strain>301 / Serotype 2a</strain>
    </source>
</reference>
<reference key="2">
    <citation type="journal article" date="2003" name="Infect. Immun.">
        <title>Complete genome sequence and comparative genomics of Shigella flexneri serotype 2a strain 2457T.</title>
        <authorList>
            <person name="Wei J."/>
            <person name="Goldberg M.B."/>
            <person name="Burland V."/>
            <person name="Venkatesan M.M."/>
            <person name="Deng W."/>
            <person name="Fournier G."/>
            <person name="Mayhew G.F."/>
            <person name="Plunkett G. III"/>
            <person name="Rose D.J."/>
            <person name="Darling A."/>
            <person name="Mau B."/>
            <person name="Perna N.T."/>
            <person name="Payne S.M."/>
            <person name="Runyen-Janecky L.J."/>
            <person name="Zhou S."/>
            <person name="Schwartz D.C."/>
            <person name="Blattner F.R."/>
        </authorList>
    </citation>
    <scope>NUCLEOTIDE SEQUENCE [LARGE SCALE GENOMIC DNA]</scope>
    <source>
        <strain>ATCC 700930 / 2457T / Serotype 2a</strain>
    </source>
</reference>
<dbReference type="EC" id="4.2.2.n1" evidence="1"/>
<dbReference type="EMBL" id="AE005674">
    <property type="protein sequence ID" value="AAN44441.1"/>
    <property type="status" value="ALT_INIT"/>
    <property type="molecule type" value="Genomic_DNA"/>
</dbReference>
<dbReference type="EMBL" id="AE014073">
    <property type="protein sequence ID" value="AAP18265.1"/>
    <property type="status" value="ALT_INIT"/>
    <property type="molecule type" value="Genomic_DNA"/>
</dbReference>
<dbReference type="RefSeq" id="NP_708734.1">
    <property type="nucleotide sequence ID" value="NC_004337.2"/>
</dbReference>
<dbReference type="RefSeq" id="WP_005064048.1">
    <property type="nucleotide sequence ID" value="NZ_WPGW01000067.1"/>
</dbReference>
<dbReference type="SMR" id="Q83Q83"/>
<dbReference type="STRING" id="198214.SF2960"/>
<dbReference type="PaxDb" id="198214-SF2960"/>
<dbReference type="GeneID" id="1026499"/>
<dbReference type="KEGG" id="sfl:SF2960"/>
<dbReference type="KEGG" id="sfx:S3163"/>
<dbReference type="PATRIC" id="fig|198214.7.peg.3519"/>
<dbReference type="HOGENOM" id="CLU_044583_0_0_6"/>
<dbReference type="Proteomes" id="UP000001006">
    <property type="component" value="Chromosome"/>
</dbReference>
<dbReference type="Proteomes" id="UP000002673">
    <property type="component" value="Chromosome"/>
</dbReference>
<dbReference type="GO" id="GO:0009279">
    <property type="term" value="C:cell outer membrane"/>
    <property type="evidence" value="ECO:0007669"/>
    <property type="project" value="UniProtKB-SubCell"/>
</dbReference>
<dbReference type="GO" id="GO:0016798">
    <property type="term" value="F:hydrolase activity, acting on glycosyl bonds"/>
    <property type="evidence" value="ECO:0007669"/>
    <property type="project" value="InterPro"/>
</dbReference>
<dbReference type="GO" id="GO:0008933">
    <property type="term" value="F:peptidoglycan lytic transglycosylase activity"/>
    <property type="evidence" value="ECO:0007669"/>
    <property type="project" value="UniProtKB-UniRule"/>
</dbReference>
<dbReference type="GO" id="GO:0016998">
    <property type="term" value="P:cell wall macromolecule catabolic process"/>
    <property type="evidence" value="ECO:0007669"/>
    <property type="project" value="UniProtKB-UniRule"/>
</dbReference>
<dbReference type="GO" id="GO:0071555">
    <property type="term" value="P:cell wall organization"/>
    <property type="evidence" value="ECO:0007669"/>
    <property type="project" value="UniProtKB-KW"/>
</dbReference>
<dbReference type="GO" id="GO:0000270">
    <property type="term" value="P:peptidoglycan metabolic process"/>
    <property type="evidence" value="ECO:0007669"/>
    <property type="project" value="InterPro"/>
</dbReference>
<dbReference type="CDD" id="cd16893">
    <property type="entry name" value="LT_MltC_MltE"/>
    <property type="match status" value="1"/>
</dbReference>
<dbReference type="FunFam" id="1.10.530.10:FF:000002">
    <property type="entry name" value="Membrane-bound lytic murein transglycosylase C"/>
    <property type="match status" value="1"/>
</dbReference>
<dbReference type="Gene3D" id="1.10.530.10">
    <property type="match status" value="1"/>
</dbReference>
<dbReference type="HAMAP" id="MF_01616">
    <property type="entry name" value="MltC"/>
    <property type="match status" value="1"/>
</dbReference>
<dbReference type="InterPro" id="IPR023346">
    <property type="entry name" value="Lysozyme-like_dom_sf"/>
</dbReference>
<dbReference type="InterPro" id="IPR023664">
    <property type="entry name" value="Murein_transglycosylaseC"/>
</dbReference>
<dbReference type="InterPro" id="IPR024570">
    <property type="entry name" value="Murein_transglycosylaseC_N"/>
</dbReference>
<dbReference type="InterPro" id="IPR000189">
    <property type="entry name" value="Transglyc_AS"/>
</dbReference>
<dbReference type="InterPro" id="IPR008258">
    <property type="entry name" value="Transglycosylase_SLT_dom_1"/>
</dbReference>
<dbReference type="NCBIfam" id="NF008670">
    <property type="entry name" value="PRK11671.1"/>
    <property type="match status" value="1"/>
</dbReference>
<dbReference type="PANTHER" id="PTHR37423:SF2">
    <property type="entry name" value="MEMBRANE-BOUND LYTIC MUREIN TRANSGLYCOSYLASE C"/>
    <property type="match status" value="1"/>
</dbReference>
<dbReference type="PANTHER" id="PTHR37423">
    <property type="entry name" value="SOLUBLE LYTIC MUREIN TRANSGLYCOSYLASE-RELATED"/>
    <property type="match status" value="1"/>
</dbReference>
<dbReference type="Pfam" id="PF11873">
    <property type="entry name" value="Mltc_N"/>
    <property type="match status" value="1"/>
</dbReference>
<dbReference type="Pfam" id="PF01464">
    <property type="entry name" value="SLT"/>
    <property type="match status" value="1"/>
</dbReference>
<dbReference type="SUPFAM" id="SSF53955">
    <property type="entry name" value="Lysozyme-like"/>
    <property type="match status" value="1"/>
</dbReference>
<dbReference type="PROSITE" id="PS51257">
    <property type="entry name" value="PROKAR_LIPOPROTEIN"/>
    <property type="match status" value="1"/>
</dbReference>
<dbReference type="PROSITE" id="PS00922">
    <property type="entry name" value="TRANSGLYCOSYLASE"/>
    <property type="match status" value="1"/>
</dbReference>
<accession>Q83Q83</accession>
<accession>Q7C017</accession>
<proteinExistence type="inferred from homology"/>
<evidence type="ECO:0000255" key="1">
    <source>
        <dbReference type="HAMAP-Rule" id="MF_01616"/>
    </source>
</evidence>
<evidence type="ECO:0000305" key="2"/>
<feature type="signal peptide" evidence="1">
    <location>
        <begin position="1"/>
        <end position="16"/>
    </location>
</feature>
<feature type="chain" id="PRO_0000032798" description="Membrane-bound lytic murein transglycosylase C">
    <location>
        <begin position="17"/>
        <end position="359"/>
    </location>
</feature>
<feature type="lipid moiety-binding region" description="N-palmitoyl cysteine" evidence="1">
    <location>
        <position position="17"/>
    </location>
</feature>
<feature type="lipid moiety-binding region" description="S-diacylglycerol cysteine" evidence="1">
    <location>
        <position position="17"/>
    </location>
</feature>
<sequence>MKKYLALALIAPLLISCSTTKKGDTYNEAWVKDTNGFDILMGQFAHNIENIWGFKEVVIAGPKDYVKYTDQYQTRSHINFDDGTITIETIAGTEPAAHLRRAIIKTLLMGDDPSSVDLYSDVDDITISKEPFLYGQVVDNTGQPIRWEGRASNFADYLLKNRLKSRSNGLRIIYSVTINMVPNHLDKRAHKYLGMVRQASRKYGVDESLILAIMQTESSFNPYAVSRSDALGLMQVVQNTAGKDVFRSQGKSGTPSRSFLFDPASNIDTGTAYLAMLNNVYLGGIDNPTSRRYAVITAYNGGAGSVLRVFSNDKIQAANIINTMTPGDVYQTLTTRHPSAESRRYLYKVNTAQKSYRRR</sequence>
<gene>
    <name evidence="1" type="primary">mltC</name>
    <name type="ordered locus">SF2960</name>
    <name type="ordered locus">S3163</name>
</gene>
<comment type="function">
    <text evidence="1">Murein-degrading enzyme. May play a role in recycling of muropeptides during cell elongation and/or cell division.</text>
</comment>
<comment type="catalytic activity">
    <reaction evidence="1">
        <text>Exolytic cleavage of the (1-&gt;4)-beta-glycosidic linkage between N-acetylmuramic acid (MurNAc) and N-acetylglucosamine (GlcNAc) residues in peptidoglycan, from either the reducing or the non-reducing ends of the peptidoglycan chains, with concomitant formation of a 1,6-anhydrobond in the MurNAc residue.</text>
        <dbReference type="EC" id="4.2.2.n1"/>
    </reaction>
</comment>
<comment type="subcellular location">
    <subcellularLocation>
        <location evidence="1">Cell outer membrane</location>
        <topology evidence="1">Lipid-anchor</topology>
    </subcellularLocation>
</comment>
<comment type="similarity">
    <text evidence="1">Belongs to the transglycosylase Slt family.</text>
</comment>
<comment type="sequence caution" evidence="2">
    <conflict type="erroneous initiation">
        <sequence resource="EMBL-CDS" id="AAN44441"/>
    </conflict>
</comment>
<comment type="sequence caution" evidence="2">
    <conflict type="erroneous initiation">
        <sequence resource="EMBL-CDS" id="AAP18265"/>
    </conflict>
</comment>